<comment type="catalytic activity">
    <reaction evidence="1">
        <text>D-arabinose 5-phosphate + phosphoenolpyruvate + H2O = 3-deoxy-alpha-D-manno-2-octulosonate-8-phosphate + phosphate</text>
        <dbReference type="Rhea" id="RHEA:14053"/>
        <dbReference type="ChEBI" id="CHEBI:15377"/>
        <dbReference type="ChEBI" id="CHEBI:43474"/>
        <dbReference type="ChEBI" id="CHEBI:57693"/>
        <dbReference type="ChEBI" id="CHEBI:58702"/>
        <dbReference type="ChEBI" id="CHEBI:85985"/>
        <dbReference type="EC" id="2.5.1.55"/>
    </reaction>
</comment>
<comment type="pathway">
    <text evidence="1">Carbohydrate biosynthesis; 3-deoxy-D-manno-octulosonate biosynthesis; 3-deoxy-D-manno-octulosonate from D-ribulose 5-phosphate: step 2/3.</text>
</comment>
<comment type="pathway">
    <text evidence="1">Bacterial outer membrane biogenesis; lipopolysaccharide biosynthesis.</text>
</comment>
<comment type="subcellular location">
    <subcellularLocation>
        <location evidence="1">Cytoplasm</location>
    </subcellularLocation>
</comment>
<comment type="similarity">
    <text evidence="1">Belongs to the KdsA family.</text>
</comment>
<comment type="sequence caution" evidence="2">
    <conflict type="erroneous initiation">
        <sequence resource="EMBL-CDS" id="AAO28415"/>
    </conflict>
</comment>
<keyword id="KW-0963">Cytoplasm</keyword>
<keyword id="KW-0448">Lipopolysaccharide biosynthesis</keyword>
<keyword id="KW-1185">Reference proteome</keyword>
<keyword id="KW-0808">Transferase</keyword>
<organism>
    <name type="scientific">Xylella fastidiosa (strain Temecula1 / ATCC 700964)</name>
    <dbReference type="NCBI Taxonomy" id="183190"/>
    <lineage>
        <taxon>Bacteria</taxon>
        <taxon>Pseudomonadati</taxon>
        <taxon>Pseudomonadota</taxon>
        <taxon>Gammaproteobacteria</taxon>
        <taxon>Lysobacterales</taxon>
        <taxon>Lysobacteraceae</taxon>
        <taxon>Xylella</taxon>
    </lineage>
</organism>
<name>KDSA_XYLFT</name>
<evidence type="ECO:0000255" key="1">
    <source>
        <dbReference type="HAMAP-Rule" id="MF_00056"/>
    </source>
</evidence>
<evidence type="ECO:0000305" key="2"/>
<protein>
    <recommendedName>
        <fullName evidence="1">2-dehydro-3-deoxyphosphooctonate aldolase</fullName>
        <ecNumber evidence="1">2.5.1.55</ecNumber>
    </recommendedName>
    <alternativeName>
        <fullName evidence="1">3-deoxy-D-manno-octulosonic acid 8-phosphate synthase</fullName>
    </alternativeName>
    <alternativeName>
        <fullName evidence="1">KDO-8-phosphate synthase</fullName>
        <shortName evidence="1">KDO 8-P synthase</shortName>
        <shortName evidence="1">KDOPS</shortName>
    </alternativeName>
    <alternativeName>
        <fullName evidence="1">Phospho-2-dehydro-3-deoxyoctonate aldolase</fullName>
    </alternativeName>
</protein>
<sequence length="276" mass="29697">MKLCGFEVGLNQPLFLIAGPCVIESLQLQLDTAGVLKEITSKLGLNFIFKSSFDKANRTSGSSFRGPGLEEGLKVLEAVKTQIGVPVLTDVHEYTPIDEVATVVDVLQTPAFLVRQTDFIRNVCAVGKPVNIKKGQFLSPWDMKPVVEKAKSTGNSQILVCERGASFGYNNLVSDMRSLAVMRETGCPVVFDATHSVQLPGAQGGRSGGQREFVPVLARAAVAVGISGLFAETHPDPPNALSDGPNAWPLRTMAMLLETLVELDAVTKKRGFLEQD</sequence>
<reference key="1">
    <citation type="journal article" date="2003" name="J. Bacteriol.">
        <title>Comparative analyses of the complete genome sequences of Pierce's disease and citrus variegated chlorosis strains of Xylella fastidiosa.</title>
        <authorList>
            <person name="Van Sluys M.A."/>
            <person name="de Oliveira M.C."/>
            <person name="Monteiro-Vitorello C.B."/>
            <person name="Miyaki C.Y."/>
            <person name="Furlan L.R."/>
            <person name="Camargo L.E.A."/>
            <person name="da Silva A.C.R."/>
            <person name="Moon D.H."/>
            <person name="Takita M.A."/>
            <person name="Lemos E.G.M."/>
            <person name="Machado M.A."/>
            <person name="Ferro M.I.T."/>
            <person name="da Silva F.R."/>
            <person name="Goldman M.H.S."/>
            <person name="Goldman G.H."/>
            <person name="Lemos M.V.F."/>
            <person name="El-Dorry H."/>
            <person name="Tsai S.M."/>
            <person name="Carrer H."/>
            <person name="Carraro D.M."/>
            <person name="de Oliveira R.C."/>
            <person name="Nunes L.R."/>
            <person name="Siqueira W.J."/>
            <person name="Coutinho L.L."/>
            <person name="Kimura E.T."/>
            <person name="Ferro E.S."/>
            <person name="Harakava R."/>
            <person name="Kuramae E.E."/>
            <person name="Marino C.L."/>
            <person name="Giglioti E."/>
            <person name="Abreu I.L."/>
            <person name="Alves L.M.C."/>
            <person name="do Amaral A.M."/>
            <person name="Baia G.S."/>
            <person name="Blanco S.R."/>
            <person name="Brito M.S."/>
            <person name="Cannavan F.S."/>
            <person name="Celestino A.V."/>
            <person name="da Cunha A.F."/>
            <person name="Fenille R.C."/>
            <person name="Ferro J.A."/>
            <person name="Formighieri E.F."/>
            <person name="Kishi L.T."/>
            <person name="Leoni S.G."/>
            <person name="Oliveira A.R."/>
            <person name="Rosa V.E. Jr."/>
            <person name="Sassaki F.T."/>
            <person name="Sena J.A.D."/>
            <person name="de Souza A.A."/>
            <person name="Truffi D."/>
            <person name="Tsukumo F."/>
            <person name="Yanai G.M."/>
            <person name="Zaros L.G."/>
            <person name="Civerolo E.L."/>
            <person name="Simpson A.J.G."/>
            <person name="Almeida N.F. Jr."/>
            <person name="Setubal J.C."/>
            <person name="Kitajima J.P."/>
        </authorList>
    </citation>
    <scope>NUCLEOTIDE SEQUENCE [LARGE SCALE GENOMIC DNA]</scope>
    <source>
        <strain>Temecula1 / ATCC 700964</strain>
    </source>
</reference>
<accession>Q87DY7</accession>
<proteinExistence type="inferred from homology"/>
<feature type="chain" id="PRO_0000187176" description="2-dehydro-3-deoxyphosphooctonate aldolase">
    <location>
        <begin position="1"/>
        <end position="276"/>
    </location>
</feature>
<gene>
    <name evidence="1" type="primary">kdsA</name>
    <name type="ordered locus">PD_0542</name>
</gene>
<dbReference type="EC" id="2.5.1.55" evidence="1"/>
<dbReference type="EMBL" id="AE009442">
    <property type="protein sequence ID" value="AAO28415.1"/>
    <property type="status" value="ALT_INIT"/>
    <property type="molecule type" value="Genomic_DNA"/>
</dbReference>
<dbReference type="RefSeq" id="WP_004084011.1">
    <property type="nucleotide sequence ID" value="NC_004556.1"/>
</dbReference>
<dbReference type="SMR" id="Q87DY7"/>
<dbReference type="GeneID" id="93904253"/>
<dbReference type="KEGG" id="xft:PD_0542"/>
<dbReference type="HOGENOM" id="CLU_036666_0_0_6"/>
<dbReference type="UniPathway" id="UPA00030"/>
<dbReference type="UniPathway" id="UPA00357">
    <property type="reaction ID" value="UER00474"/>
</dbReference>
<dbReference type="Proteomes" id="UP000002516">
    <property type="component" value="Chromosome"/>
</dbReference>
<dbReference type="GO" id="GO:0005737">
    <property type="term" value="C:cytoplasm"/>
    <property type="evidence" value="ECO:0007669"/>
    <property type="project" value="UniProtKB-SubCell"/>
</dbReference>
<dbReference type="GO" id="GO:0008676">
    <property type="term" value="F:3-deoxy-8-phosphooctulonate synthase activity"/>
    <property type="evidence" value="ECO:0007669"/>
    <property type="project" value="UniProtKB-UniRule"/>
</dbReference>
<dbReference type="GO" id="GO:0019294">
    <property type="term" value="P:keto-3-deoxy-D-manno-octulosonic acid biosynthetic process"/>
    <property type="evidence" value="ECO:0007669"/>
    <property type="project" value="UniProtKB-UniRule"/>
</dbReference>
<dbReference type="Gene3D" id="3.20.20.70">
    <property type="entry name" value="Aldolase class I"/>
    <property type="match status" value="1"/>
</dbReference>
<dbReference type="HAMAP" id="MF_00056">
    <property type="entry name" value="KDO8P_synth"/>
    <property type="match status" value="1"/>
</dbReference>
<dbReference type="InterPro" id="IPR013785">
    <property type="entry name" value="Aldolase_TIM"/>
</dbReference>
<dbReference type="InterPro" id="IPR006218">
    <property type="entry name" value="DAHP1/KDSA"/>
</dbReference>
<dbReference type="InterPro" id="IPR006269">
    <property type="entry name" value="KDO8P_synthase"/>
</dbReference>
<dbReference type="NCBIfam" id="TIGR01362">
    <property type="entry name" value="KDO8P_synth"/>
    <property type="match status" value="1"/>
</dbReference>
<dbReference type="NCBIfam" id="NF003543">
    <property type="entry name" value="PRK05198.1"/>
    <property type="match status" value="1"/>
</dbReference>
<dbReference type="PANTHER" id="PTHR21057">
    <property type="entry name" value="PHOSPHO-2-DEHYDRO-3-DEOXYHEPTONATE ALDOLASE"/>
    <property type="match status" value="1"/>
</dbReference>
<dbReference type="Pfam" id="PF00793">
    <property type="entry name" value="DAHP_synth_1"/>
    <property type="match status" value="1"/>
</dbReference>
<dbReference type="SUPFAM" id="SSF51569">
    <property type="entry name" value="Aldolase"/>
    <property type="match status" value="1"/>
</dbReference>